<organism>
    <name type="scientific">Chaetomium globosum (strain ATCC 6205 / CBS 148.51 / DSM 1962 / NBRC 6347 / NRRL 1970)</name>
    <name type="common">Soil fungus</name>
    <dbReference type="NCBI Taxonomy" id="306901"/>
    <lineage>
        <taxon>Eukaryota</taxon>
        <taxon>Fungi</taxon>
        <taxon>Dikarya</taxon>
        <taxon>Ascomycota</taxon>
        <taxon>Pezizomycotina</taxon>
        <taxon>Sordariomycetes</taxon>
        <taxon>Sordariomycetidae</taxon>
        <taxon>Sordariales</taxon>
        <taxon>Chaetomiaceae</taxon>
        <taxon>Chaetomium</taxon>
    </lineage>
</organism>
<reference key="1">
    <citation type="journal article" date="2015" name="Genome Announc.">
        <title>Draft genome sequence of the cellulolytic fungus Chaetomium globosum.</title>
        <authorList>
            <person name="Cuomo C.A."/>
            <person name="Untereiner W.A."/>
            <person name="Ma L.-J."/>
            <person name="Grabherr M."/>
            <person name="Birren B.W."/>
        </authorList>
    </citation>
    <scope>NUCLEOTIDE SEQUENCE [LARGE SCALE GENOMIC DNA]</scope>
    <source>
        <strain>ATCC 6205 / CBS 148.51 / DSM 1962 / NBRC 6347 / NRRL 1970</strain>
    </source>
</reference>
<keyword id="KW-0256">Endoplasmic reticulum</keyword>
<keyword id="KW-0378">Hydrolase</keyword>
<keyword id="KW-0472">Membrane</keyword>
<keyword id="KW-0645">Protease</keyword>
<keyword id="KW-1185">Reference proteome</keyword>
<keyword id="KW-0735">Signal-anchor</keyword>
<keyword id="KW-0812">Transmembrane</keyword>
<keyword id="KW-1133">Transmembrane helix</keyword>
<dbReference type="EC" id="3.4.21.89" evidence="1"/>
<dbReference type="EMBL" id="CH408032">
    <property type="protein sequence ID" value="EAQ87684.1"/>
    <property type="molecule type" value="Genomic_DNA"/>
</dbReference>
<dbReference type="RefSeq" id="XP_001223517.1">
    <property type="nucleotide sequence ID" value="XM_001223516.1"/>
</dbReference>
<dbReference type="SMR" id="Q2H1P3"/>
<dbReference type="FunCoup" id="Q2H1P3">
    <property type="interactions" value="597"/>
</dbReference>
<dbReference type="STRING" id="306901.Q2H1P3"/>
<dbReference type="MEROPS" id="S26.010"/>
<dbReference type="GeneID" id="4392489"/>
<dbReference type="VEuPathDB" id="FungiDB:CHGG_04303"/>
<dbReference type="eggNOG" id="KOG3342">
    <property type="taxonomic scope" value="Eukaryota"/>
</dbReference>
<dbReference type="HOGENOM" id="CLU_089996_0_0_1"/>
<dbReference type="InParanoid" id="Q2H1P3"/>
<dbReference type="OMA" id="ILMNEYP"/>
<dbReference type="OrthoDB" id="10257561at2759"/>
<dbReference type="Proteomes" id="UP000001056">
    <property type="component" value="Unassembled WGS sequence"/>
</dbReference>
<dbReference type="GO" id="GO:0005787">
    <property type="term" value="C:signal peptidase complex"/>
    <property type="evidence" value="ECO:0007669"/>
    <property type="project" value="EnsemblFungi"/>
</dbReference>
<dbReference type="GO" id="GO:0004252">
    <property type="term" value="F:serine-type endopeptidase activity"/>
    <property type="evidence" value="ECO:0007669"/>
    <property type="project" value="UniProtKB-EC"/>
</dbReference>
<dbReference type="GO" id="GO:0045047">
    <property type="term" value="P:protein targeting to ER"/>
    <property type="evidence" value="ECO:0007669"/>
    <property type="project" value="EnsemblFungi"/>
</dbReference>
<dbReference type="GO" id="GO:0006465">
    <property type="term" value="P:signal peptide processing"/>
    <property type="evidence" value="ECO:0007669"/>
    <property type="project" value="EnsemblFungi"/>
</dbReference>
<dbReference type="CDD" id="cd06530">
    <property type="entry name" value="S26_SPase_I"/>
    <property type="match status" value="1"/>
</dbReference>
<dbReference type="Gene3D" id="2.10.109.10">
    <property type="entry name" value="Umud Fragment, subunit A"/>
    <property type="match status" value="1"/>
</dbReference>
<dbReference type="InterPro" id="IPR036286">
    <property type="entry name" value="LexA/Signal_pep-like_sf"/>
</dbReference>
<dbReference type="InterPro" id="IPR019756">
    <property type="entry name" value="Pept_S26A_signal_pept_1_Ser-AS"/>
</dbReference>
<dbReference type="InterPro" id="IPR019533">
    <property type="entry name" value="Peptidase_S26"/>
</dbReference>
<dbReference type="InterPro" id="IPR001733">
    <property type="entry name" value="Peptidase_S26B"/>
</dbReference>
<dbReference type="NCBIfam" id="TIGR02228">
    <property type="entry name" value="sigpep_I_arch"/>
    <property type="match status" value="1"/>
</dbReference>
<dbReference type="PANTHER" id="PTHR10806">
    <property type="entry name" value="SIGNAL PEPTIDASE COMPLEX CATALYTIC SUBUNIT SEC11"/>
    <property type="match status" value="1"/>
</dbReference>
<dbReference type="PANTHER" id="PTHR10806:SF6">
    <property type="entry name" value="SIGNAL PEPTIDASE COMPLEX CATALYTIC SUBUNIT SEC11"/>
    <property type="match status" value="1"/>
</dbReference>
<dbReference type="PRINTS" id="PR00728">
    <property type="entry name" value="SIGNALPTASE"/>
</dbReference>
<dbReference type="SUPFAM" id="SSF51306">
    <property type="entry name" value="LexA/Signal peptidase"/>
    <property type="match status" value="1"/>
</dbReference>
<dbReference type="PROSITE" id="PS00501">
    <property type="entry name" value="SPASE_I_1"/>
    <property type="match status" value="1"/>
</dbReference>
<gene>
    <name type="primary">SEC11</name>
    <name type="ORF">CHGG_04303</name>
</gene>
<name>SEC11_CHAGB</name>
<feature type="chain" id="PRO_0000412323" description="Signal peptidase complex catalytic subunit SEC11">
    <location>
        <begin position="1"/>
        <end position="172"/>
    </location>
</feature>
<feature type="topological domain" description="Cytoplasmic" evidence="4">
    <location>
        <begin position="1"/>
        <end position="14"/>
    </location>
</feature>
<feature type="transmembrane region" description="Helical; Signal-anchor for type II membrane protein" evidence="3">
    <location>
        <begin position="15"/>
        <end position="35"/>
    </location>
</feature>
<feature type="topological domain" description="Lumenal" evidence="4">
    <location>
        <begin position="36"/>
        <end position="172"/>
    </location>
</feature>
<feature type="region of interest" description="C-terminal short (CTS) helix" evidence="2">
    <location>
        <begin position="158"/>
        <end position="169"/>
    </location>
</feature>
<feature type="active site" description="Charge relay system" evidence="1">
    <location>
        <position position="49"/>
    </location>
</feature>
<feature type="active site" description="Charge relay system" evidence="1">
    <location>
        <position position="90"/>
    </location>
</feature>
<feature type="active site" description="Charge relay system" evidence="1">
    <location>
        <position position="115"/>
    </location>
</feature>
<evidence type="ECO:0000250" key="1">
    <source>
        <dbReference type="UniProtKB" id="P15367"/>
    </source>
</evidence>
<evidence type="ECO:0000250" key="2">
    <source>
        <dbReference type="UniProtKB" id="P67812"/>
    </source>
</evidence>
<evidence type="ECO:0000255" key="3"/>
<evidence type="ECO:0000305" key="4"/>
<comment type="function">
    <text evidence="1 2">Catalytic component of the signal peptidase complex (SPC) which catalyzes the cleavage of N-terminal signal sequences from nascent proteins as they are translocated into the lumen of the endoplasmic reticulum (By similarity). Specifically cleaves N-terminal signal peptides that contain a hydrophobic alpha-helix (h-region) shorter than 18-20 amino acids (By similarity).</text>
</comment>
<comment type="catalytic activity">
    <reaction evidence="1">
        <text>Cleavage of hydrophobic, N-terminal signal or leader sequences from secreted and periplasmic proteins.</text>
        <dbReference type="EC" id="3.4.21.89"/>
    </reaction>
</comment>
<comment type="subunit">
    <text evidence="1 2">Component of the signal peptidase complex (SPC) composed of a catalytic subunit SEC11 and three accessory subunits SPC1, SPC2 and SPC3 (By similarity). The complex induces a local thinning of the ER membrane which is used to measure the length of the signal peptide (SP) h-region of protein substrates. This ensures the selectivity of the complex towards h-regions shorter than 18-20 amino acids (By similarity). SPC associates with the translocon complex (By similarity).</text>
</comment>
<comment type="subcellular location">
    <subcellularLocation>
        <location evidence="1">Endoplasmic reticulum membrane</location>
        <topology evidence="1">Single-pass type II membrane protein</topology>
    </subcellularLocation>
</comment>
<comment type="domain">
    <text evidence="2">The C-terminal short (CTS) helix is essential for catalytic activity. It may be accommodated as a transmembrane helix in the thinned membrane environment of the complex, similarly to the signal peptide in the complex substrates.</text>
</comment>
<comment type="similarity">
    <text evidence="4">Belongs to the peptidase S26B family.</text>
</comment>
<protein>
    <recommendedName>
        <fullName>Signal peptidase complex catalytic subunit SEC11</fullName>
        <ecNumber evidence="1">3.4.21.89</ecNumber>
    </recommendedName>
    <alternativeName>
        <fullName>Signal peptidase I</fullName>
    </alternativeName>
</protein>
<proteinExistence type="inferred from homology"/>
<sequence>MLSSLQNPRQAAAQLMNFGLILSTAFMMWKGLSVITDSPSPIVVVLSGSMEPAFQRGDLLLLWNRNLISETNVGEIVVYNVKGKDIPIVHRIVRKFGVGPDAKLLTKGDNNAADDTELYARGQDYLNRKDIVGSVVGYMPFVGYVTIMLSEHPWLKTVMLGIMGLVVVLQRE</sequence>
<accession>Q2H1P3</accession>